<dbReference type="EMBL" id="U34795">
    <property type="protein sequence ID" value="AAC43703.1"/>
    <property type="molecule type" value="Genomic_DNA"/>
</dbReference>
<dbReference type="EMBL" id="U00089">
    <property type="protein sequence ID" value="AAB96301.1"/>
    <property type="molecule type" value="Genomic_DNA"/>
</dbReference>
<dbReference type="PIR" id="S62805">
    <property type="entry name" value="S62805"/>
</dbReference>
<dbReference type="RefSeq" id="NP_109866.1">
    <property type="nucleotide sequence ID" value="NC_000912.1"/>
</dbReference>
<dbReference type="RefSeq" id="WP_010874535.1">
    <property type="nucleotide sequence ID" value="NZ_OU342337.1"/>
</dbReference>
<dbReference type="PDB" id="7OOC">
    <property type="method" value="EM"/>
    <property type="resolution" value="3.70 A"/>
    <property type="chains" value="M=1-61"/>
</dbReference>
<dbReference type="PDB" id="7P6Z">
    <property type="method" value="EM"/>
    <property type="resolution" value="3.50 A"/>
    <property type="chains" value="M=1-61"/>
</dbReference>
<dbReference type="PDB" id="7PAH">
    <property type="method" value="EM"/>
    <property type="resolution" value="9.50 A"/>
    <property type="chains" value="M=1-61"/>
</dbReference>
<dbReference type="PDB" id="7PAI">
    <property type="method" value="EM"/>
    <property type="resolution" value="6.70 A"/>
    <property type="chains" value="M=1-61"/>
</dbReference>
<dbReference type="PDB" id="7PAJ">
    <property type="method" value="EM"/>
    <property type="resolution" value="7.30 A"/>
    <property type="chains" value="M=1-61"/>
</dbReference>
<dbReference type="PDB" id="7PAK">
    <property type="method" value="EM"/>
    <property type="resolution" value="5.30 A"/>
    <property type="chains" value="M=1-61"/>
</dbReference>
<dbReference type="PDB" id="7PAL">
    <property type="method" value="EM"/>
    <property type="resolution" value="4.70 A"/>
    <property type="chains" value="M=1-61"/>
</dbReference>
<dbReference type="PDB" id="7PAM">
    <property type="method" value="EM"/>
    <property type="resolution" value="6.80 A"/>
    <property type="chains" value="M=1-61"/>
</dbReference>
<dbReference type="PDB" id="7PAN">
    <property type="method" value="EM"/>
    <property type="resolution" value="9.70 A"/>
    <property type="chains" value="M=1-61"/>
</dbReference>
<dbReference type="PDB" id="7PAO">
    <property type="method" value="EM"/>
    <property type="resolution" value="7.00 A"/>
    <property type="chains" value="M=1-61"/>
</dbReference>
<dbReference type="PDB" id="7PAQ">
    <property type="method" value="EM"/>
    <property type="resolution" value="8.90 A"/>
    <property type="chains" value="M=1-61"/>
</dbReference>
<dbReference type="PDB" id="7PAR">
    <property type="method" value="EM"/>
    <property type="resolution" value="8.20 A"/>
    <property type="chains" value="M=1-61"/>
</dbReference>
<dbReference type="PDB" id="7PAS">
    <property type="method" value="EM"/>
    <property type="resolution" value="16.00 A"/>
    <property type="chains" value="M=1-61"/>
</dbReference>
<dbReference type="PDB" id="7PH9">
    <property type="method" value="EM"/>
    <property type="resolution" value="8.70 A"/>
    <property type="chains" value="M=1-61"/>
</dbReference>
<dbReference type="PDB" id="7PHA">
    <property type="method" value="EM"/>
    <property type="resolution" value="8.50 A"/>
    <property type="chains" value="M=1-61"/>
</dbReference>
<dbReference type="PDB" id="7PHB">
    <property type="method" value="EM"/>
    <property type="resolution" value="4.90 A"/>
    <property type="chains" value="M=1-61"/>
</dbReference>
<dbReference type="PDB" id="7PHC">
    <property type="method" value="EM"/>
    <property type="resolution" value="9.90 A"/>
    <property type="chains" value="M=1-61"/>
</dbReference>
<dbReference type="PDB" id="7PI8">
    <property type="method" value="EM"/>
    <property type="resolution" value="8.90 A"/>
    <property type="chains" value="M=1-61"/>
</dbReference>
<dbReference type="PDB" id="7PI9">
    <property type="method" value="EM"/>
    <property type="resolution" value="6.30 A"/>
    <property type="chains" value="M=1-61"/>
</dbReference>
<dbReference type="PDB" id="7PIA">
    <property type="method" value="EM"/>
    <property type="resolution" value="13.60 A"/>
    <property type="chains" value="M=1-61"/>
</dbReference>
<dbReference type="PDB" id="7PIB">
    <property type="method" value="EM"/>
    <property type="resolution" value="4.70 A"/>
    <property type="chains" value="M=1-61"/>
</dbReference>
<dbReference type="PDB" id="7PIC">
    <property type="method" value="EM"/>
    <property type="resolution" value="9.10 A"/>
    <property type="chains" value="M=1-61"/>
</dbReference>
<dbReference type="PDB" id="7PIO">
    <property type="method" value="EM"/>
    <property type="resolution" value="9.50 A"/>
    <property type="chains" value="M=1-61"/>
</dbReference>
<dbReference type="PDB" id="7PIP">
    <property type="method" value="EM"/>
    <property type="resolution" value="9.30 A"/>
    <property type="chains" value="M=1-61"/>
</dbReference>
<dbReference type="PDB" id="7PIQ">
    <property type="method" value="EM"/>
    <property type="resolution" value="9.70 A"/>
    <property type="chains" value="M=1-61"/>
</dbReference>
<dbReference type="PDB" id="7PIR">
    <property type="method" value="EM"/>
    <property type="resolution" value="12.10 A"/>
    <property type="chains" value="M=1-61"/>
</dbReference>
<dbReference type="PDB" id="7PIS">
    <property type="method" value="EM"/>
    <property type="resolution" value="15.00 A"/>
    <property type="chains" value="M=1-61"/>
</dbReference>
<dbReference type="PDB" id="7PIT">
    <property type="method" value="EM"/>
    <property type="resolution" value="5.70 A"/>
    <property type="chains" value="M=1-61"/>
</dbReference>
<dbReference type="PDB" id="8P6P">
    <property type="method" value="EM"/>
    <property type="resolution" value="3.20 A"/>
    <property type="chains" value="M=1-61"/>
</dbReference>
<dbReference type="PDB" id="8P7X">
    <property type="method" value="EM"/>
    <property type="resolution" value="3.03 A"/>
    <property type="chains" value="M=1-61"/>
</dbReference>
<dbReference type="PDB" id="8P7Y">
    <property type="method" value="EM"/>
    <property type="resolution" value="3.70 A"/>
    <property type="chains" value="M=1-61"/>
</dbReference>
<dbReference type="PDB" id="8P8V">
    <property type="method" value="EM"/>
    <property type="resolution" value="8.70 A"/>
    <property type="chains" value="M=1-61"/>
</dbReference>
<dbReference type="PDB" id="8P8W">
    <property type="method" value="EM"/>
    <property type="resolution" value="8.70 A"/>
    <property type="chains" value="M=1-61"/>
</dbReference>
<dbReference type="PDBsum" id="7OOC"/>
<dbReference type="PDBsum" id="7P6Z"/>
<dbReference type="PDBsum" id="7PAH"/>
<dbReference type="PDBsum" id="7PAI"/>
<dbReference type="PDBsum" id="7PAJ"/>
<dbReference type="PDBsum" id="7PAK"/>
<dbReference type="PDBsum" id="7PAL"/>
<dbReference type="PDBsum" id="7PAM"/>
<dbReference type="PDBsum" id="7PAN"/>
<dbReference type="PDBsum" id="7PAO"/>
<dbReference type="PDBsum" id="7PAQ"/>
<dbReference type="PDBsum" id="7PAR"/>
<dbReference type="PDBsum" id="7PAS"/>
<dbReference type="PDBsum" id="7PH9"/>
<dbReference type="PDBsum" id="7PHA"/>
<dbReference type="PDBsum" id="7PHB"/>
<dbReference type="PDBsum" id="7PHC"/>
<dbReference type="PDBsum" id="7PI8"/>
<dbReference type="PDBsum" id="7PI9"/>
<dbReference type="PDBsum" id="7PIA"/>
<dbReference type="PDBsum" id="7PIB"/>
<dbReference type="PDBsum" id="7PIC"/>
<dbReference type="PDBsum" id="7PIO"/>
<dbReference type="PDBsum" id="7PIP"/>
<dbReference type="PDBsum" id="7PIQ"/>
<dbReference type="PDBsum" id="7PIR"/>
<dbReference type="PDBsum" id="7PIS"/>
<dbReference type="PDBsum" id="7PIT"/>
<dbReference type="PDBsum" id="8P6P"/>
<dbReference type="PDBsum" id="8P7X"/>
<dbReference type="PDBsum" id="8P7Y"/>
<dbReference type="PDBsum" id="8P8V"/>
<dbReference type="PDBsum" id="8P8W"/>
<dbReference type="EMDB" id="EMD-13234"/>
<dbReference type="EMDB" id="EMD-13272"/>
<dbReference type="EMDB" id="EMD-13273"/>
<dbReference type="EMDB" id="EMD-13274"/>
<dbReference type="EMDB" id="EMD-13275"/>
<dbReference type="EMDB" id="EMD-13276"/>
<dbReference type="EMDB" id="EMD-13277"/>
<dbReference type="EMDB" id="EMD-13278"/>
<dbReference type="EMDB" id="EMD-13279"/>
<dbReference type="EMDB" id="EMD-13280"/>
<dbReference type="EMDB" id="EMD-13281"/>
<dbReference type="EMDB" id="EMD-13282"/>
<dbReference type="EMDB" id="EMD-13410"/>
<dbReference type="EMDB" id="EMD-13411"/>
<dbReference type="EMDB" id="EMD-13412"/>
<dbReference type="EMDB" id="EMD-13413"/>
<dbReference type="EMDB" id="EMD-13432"/>
<dbReference type="EMDB" id="EMD-13433"/>
<dbReference type="EMDB" id="EMD-13434"/>
<dbReference type="EMDB" id="EMD-13435"/>
<dbReference type="EMDB" id="EMD-13436"/>
<dbReference type="EMDB" id="EMD-13445"/>
<dbReference type="EMDB" id="EMD-13446"/>
<dbReference type="EMDB" id="EMD-13447"/>
<dbReference type="EMDB" id="EMD-13448"/>
<dbReference type="EMDB" id="EMD-13449"/>
<dbReference type="EMDB" id="EMD-13450"/>
<dbReference type="SMR" id="Q50305"/>
<dbReference type="IntAct" id="Q50305">
    <property type="interactions" value="1"/>
</dbReference>
<dbReference type="STRING" id="272634.MPN_178"/>
<dbReference type="EnsemblBacteria" id="AAB96301">
    <property type="protein sequence ID" value="AAB96301"/>
    <property type="gene ID" value="MPN_178"/>
</dbReference>
<dbReference type="KEGG" id="mpn:MPN_178"/>
<dbReference type="PATRIC" id="fig|272634.6.peg.196"/>
<dbReference type="HOGENOM" id="CLU_139869_3_0_14"/>
<dbReference type="OrthoDB" id="9810484at2"/>
<dbReference type="BioCyc" id="MPNE272634:G1GJ3-291-MONOMER"/>
<dbReference type="Proteomes" id="UP000000808">
    <property type="component" value="Chromosome"/>
</dbReference>
<dbReference type="GO" id="GO:0005737">
    <property type="term" value="C:cytoplasm"/>
    <property type="evidence" value="ECO:0007669"/>
    <property type="project" value="UniProtKB-ARBA"/>
</dbReference>
<dbReference type="GO" id="GO:0015935">
    <property type="term" value="C:small ribosomal subunit"/>
    <property type="evidence" value="ECO:0007669"/>
    <property type="project" value="TreeGrafter"/>
</dbReference>
<dbReference type="GO" id="GO:0019843">
    <property type="term" value="F:rRNA binding"/>
    <property type="evidence" value="ECO:0007669"/>
    <property type="project" value="UniProtKB-UniRule"/>
</dbReference>
<dbReference type="GO" id="GO:0003735">
    <property type="term" value="F:structural constituent of ribosome"/>
    <property type="evidence" value="ECO:0007669"/>
    <property type="project" value="InterPro"/>
</dbReference>
<dbReference type="GO" id="GO:0008270">
    <property type="term" value="F:zinc ion binding"/>
    <property type="evidence" value="ECO:0007669"/>
    <property type="project" value="UniProtKB-UniRule"/>
</dbReference>
<dbReference type="GO" id="GO:0006412">
    <property type="term" value="P:translation"/>
    <property type="evidence" value="ECO:0007669"/>
    <property type="project" value="UniProtKB-UniRule"/>
</dbReference>
<dbReference type="FunFam" id="4.10.830.10:FF:000001">
    <property type="entry name" value="30S ribosomal protein S14 type Z"/>
    <property type="match status" value="1"/>
</dbReference>
<dbReference type="Gene3D" id="4.10.830.10">
    <property type="entry name" value="30s Ribosomal Protein S14, Chain N"/>
    <property type="match status" value="1"/>
</dbReference>
<dbReference type="HAMAP" id="MF_01364_B">
    <property type="entry name" value="Ribosomal_uS14_2_B"/>
    <property type="match status" value="1"/>
</dbReference>
<dbReference type="InterPro" id="IPR001209">
    <property type="entry name" value="Ribosomal_uS14"/>
</dbReference>
<dbReference type="InterPro" id="IPR023053">
    <property type="entry name" value="Ribosomal_uS14_bact"/>
</dbReference>
<dbReference type="InterPro" id="IPR018271">
    <property type="entry name" value="Ribosomal_uS14_CS"/>
</dbReference>
<dbReference type="InterPro" id="IPR043140">
    <property type="entry name" value="Ribosomal_uS14_sf"/>
</dbReference>
<dbReference type="NCBIfam" id="NF005974">
    <property type="entry name" value="PRK08061.1"/>
    <property type="match status" value="1"/>
</dbReference>
<dbReference type="PANTHER" id="PTHR19836">
    <property type="entry name" value="30S RIBOSOMAL PROTEIN S14"/>
    <property type="match status" value="1"/>
</dbReference>
<dbReference type="PANTHER" id="PTHR19836:SF19">
    <property type="entry name" value="SMALL RIBOSOMAL SUBUNIT PROTEIN US14M"/>
    <property type="match status" value="1"/>
</dbReference>
<dbReference type="Pfam" id="PF00253">
    <property type="entry name" value="Ribosomal_S14"/>
    <property type="match status" value="1"/>
</dbReference>
<dbReference type="SUPFAM" id="SSF57716">
    <property type="entry name" value="Glucocorticoid receptor-like (DNA-binding domain)"/>
    <property type="match status" value="1"/>
</dbReference>
<dbReference type="PROSITE" id="PS00527">
    <property type="entry name" value="RIBOSOMAL_S14"/>
    <property type="match status" value="1"/>
</dbReference>
<accession>Q50305</accession>
<evidence type="ECO:0000255" key="1">
    <source>
        <dbReference type="HAMAP-Rule" id="MF_01364"/>
    </source>
</evidence>
<evidence type="ECO:0000305" key="2"/>
<evidence type="ECO:0007829" key="3">
    <source>
        <dbReference type="PDB" id="8P6P"/>
    </source>
</evidence>
<name>RS14Z_MYCPN</name>
<keyword id="KW-0002">3D-structure</keyword>
<keyword id="KW-0479">Metal-binding</keyword>
<keyword id="KW-1185">Reference proteome</keyword>
<keyword id="KW-0687">Ribonucleoprotein</keyword>
<keyword id="KW-0689">Ribosomal protein</keyword>
<keyword id="KW-0694">RNA-binding</keyword>
<keyword id="KW-0699">rRNA-binding</keyword>
<keyword id="KW-0862">Zinc</keyword>
<comment type="function">
    <text evidence="1">Binds 16S rRNA, required for the assembly of 30S particles and may also be responsible for determining the conformation of the 16S rRNA at the A site.</text>
</comment>
<comment type="cofactor">
    <cofactor evidence="1">
        <name>Zn(2+)</name>
        <dbReference type="ChEBI" id="CHEBI:29105"/>
    </cofactor>
    <text evidence="1">Binds 1 zinc ion per subunit.</text>
</comment>
<comment type="subunit">
    <text evidence="1">Part of the 30S ribosomal subunit. Contacts proteins S3 and S10.</text>
</comment>
<comment type="similarity">
    <text evidence="1">Belongs to the universal ribosomal protein uS14 family. Zinc-binding uS14 subfamily.</text>
</comment>
<sequence>MAKKSLKVKQTRIPKFAVRAYTRCQRCGRARAVLSHFGVCRLCFRELAYAGAIPGVKKASW</sequence>
<feature type="chain" id="PRO_0000130908" description="Small ribosomal subunit protein uS14">
    <location>
        <begin position="1"/>
        <end position="61"/>
    </location>
</feature>
<feature type="binding site" evidence="1">
    <location>
        <position position="24"/>
    </location>
    <ligand>
        <name>Zn(2+)</name>
        <dbReference type="ChEBI" id="CHEBI:29105"/>
    </ligand>
</feature>
<feature type="binding site" evidence="1">
    <location>
        <position position="27"/>
    </location>
    <ligand>
        <name>Zn(2+)</name>
        <dbReference type="ChEBI" id="CHEBI:29105"/>
    </ligand>
</feature>
<feature type="binding site" evidence="1">
    <location>
        <position position="40"/>
    </location>
    <ligand>
        <name>Zn(2+)</name>
        <dbReference type="ChEBI" id="CHEBI:29105"/>
    </ligand>
</feature>
<feature type="binding site" evidence="1">
    <location>
        <position position="43"/>
    </location>
    <ligand>
        <name>Zn(2+)</name>
        <dbReference type="ChEBI" id="CHEBI:29105"/>
    </ligand>
</feature>
<feature type="helix" evidence="3">
    <location>
        <begin position="4"/>
        <end position="11"/>
    </location>
</feature>
<feature type="helix" evidence="3">
    <location>
        <begin position="17"/>
        <end position="19"/>
    </location>
</feature>
<feature type="strand" evidence="3">
    <location>
        <begin position="25"/>
        <end position="27"/>
    </location>
</feature>
<feature type="strand" evidence="3">
    <location>
        <begin position="31"/>
        <end position="34"/>
    </location>
</feature>
<feature type="turn" evidence="3">
    <location>
        <begin position="35"/>
        <end position="38"/>
    </location>
</feature>
<feature type="helix" evidence="3">
    <location>
        <begin position="41"/>
        <end position="50"/>
    </location>
</feature>
<organism>
    <name type="scientific">Mycoplasma pneumoniae (strain ATCC 29342 / M129 / Subtype 1)</name>
    <name type="common">Mycoplasmoides pneumoniae</name>
    <dbReference type="NCBI Taxonomy" id="272634"/>
    <lineage>
        <taxon>Bacteria</taxon>
        <taxon>Bacillati</taxon>
        <taxon>Mycoplasmatota</taxon>
        <taxon>Mycoplasmoidales</taxon>
        <taxon>Mycoplasmoidaceae</taxon>
        <taxon>Mycoplasmoides</taxon>
    </lineage>
</organism>
<protein>
    <recommendedName>
        <fullName evidence="1">Small ribosomal subunit protein uS14</fullName>
    </recommendedName>
    <alternativeName>
        <fullName evidence="2">30S ribosomal protein S14 type Z</fullName>
    </alternativeName>
</protein>
<proteinExistence type="evidence at protein level"/>
<reference key="1">
    <citation type="journal article" date="1996" name="Nucleic Acids Res.">
        <title>Sequence analysis of 56 kb from the genome of the bacterium Mycoplasma pneumoniae comprising the dnaA region, the atp operon and a cluster of ribosomal protein genes.</title>
        <authorList>
            <person name="Hilbert H."/>
            <person name="Himmelreich R."/>
            <person name="Plagens H."/>
            <person name="Herrmann R."/>
        </authorList>
    </citation>
    <scope>NUCLEOTIDE SEQUENCE [GENOMIC DNA]</scope>
    <source>
        <strain>ATCC 29342 / M129 / Subtype 1</strain>
    </source>
</reference>
<reference key="2">
    <citation type="journal article" date="1996" name="Nucleic Acids Res.">
        <title>Complete sequence analysis of the genome of the bacterium Mycoplasma pneumoniae.</title>
        <authorList>
            <person name="Himmelreich R."/>
            <person name="Hilbert H."/>
            <person name="Plagens H."/>
            <person name="Pirkl E."/>
            <person name="Li B.-C."/>
            <person name="Herrmann R."/>
        </authorList>
    </citation>
    <scope>NUCLEOTIDE SEQUENCE [LARGE SCALE GENOMIC DNA]</scope>
    <source>
        <strain>ATCC 29342 / M129 / Subtype 1</strain>
    </source>
</reference>
<gene>
    <name evidence="1" type="primary">rpsZ</name>
    <name evidence="1" type="synonym">rpsN</name>
    <name type="ordered locus">MPN_178</name>
    <name type="ORF">MP653</name>
</gene>